<comment type="function">
    <text evidence="1">NDH-1 shuttles electrons from NADH, via FMN and iron-sulfur (Fe-S) centers, to quinones in the respiratory chain. The immediate electron acceptor for the enzyme in this species is believed to be ubiquinone. Couples the redox reaction to proton translocation (for every two electrons transferred, four hydrogen ions are translocated across the cytoplasmic membrane), and thus conserves the redox energy in a proton gradient.</text>
</comment>
<comment type="catalytic activity">
    <reaction evidence="1">
        <text>a quinone + NADH + 5 H(+)(in) = a quinol + NAD(+) + 4 H(+)(out)</text>
        <dbReference type="Rhea" id="RHEA:57888"/>
        <dbReference type="ChEBI" id="CHEBI:15378"/>
        <dbReference type="ChEBI" id="CHEBI:24646"/>
        <dbReference type="ChEBI" id="CHEBI:57540"/>
        <dbReference type="ChEBI" id="CHEBI:57945"/>
        <dbReference type="ChEBI" id="CHEBI:132124"/>
    </reaction>
</comment>
<comment type="subunit">
    <text evidence="1">NDH-1 is composed of 14 different subunits. Subunits NuoA, H, J, K, L, M, N constitute the membrane sector of the complex.</text>
</comment>
<comment type="subcellular location">
    <subcellularLocation>
        <location evidence="1">Cell inner membrane</location>
        <topology evidence="1">Multi-pass membrane protein</topology>
    </subcellularLocation>
</comment>
<comment type="similarity">
    <text evidence="1">Belongs to the complex I subunit 4L family.</text>
</comment>
<evidence type="ECO:0000255" key="1">
    <source>
        <dbReference type="HAMAP-Rule" id="MF_01456"/>
    </source>
</evidence>
<sequence length="102" mass="11136">MNGIPMEHGLLLAAILFCIGLCGLLIRRNLLFILMSIEIMMNASALAFVVAGSRWAQADGQIMYILVISLAAAEASIGLALLLLLYRRYHTLNVDTVSEMRG</sequence>
<proteinExistence type="inferred from homology"/>
<organism>
    <name type="scientific">Aeromonas salmonicida (strain A449)</name>
    <dbReference type="NCBI Taxonomy" id="382245"/>
    <lineage>
        <taxon>Bacteria</taxon>
        <taxon>Pseudomonadati</taxon>
        <taxon>Pseudomonadota</taxon>
        <taxon>Gammaproteobacteria</taxon>
        <taxon>Aeromonadales</taxon>
        <taxon>Aeromonadaceae</taxon>
        <taxon>Aeromonas</taxon>
    </lineage>
</organism>
<reference key="1">
    <citation type="journal article" date="2008" name="BMC Genomics">
        <title>The genome of Aeromonas salmonicida subsp. salmonicida A449: insights into the evolution of a fish pathogen.</title>
        <authorList>
            <person name="Reith M.E."/>
            <person name="Singh R.K."/>
            <person name="Curtis B."/>
            <person name="Boyd J.M."/>
            <person name="Bouevitch A."/>
            <person name="Kimball J."/>
            <person name="Munholland J."/>
            <person name="Murphy C."/>
            <person name="Sarty D."/>
            <person name="Williams J."/>
            <person name="Nash J.H."/>
            <person name="Johnson S.C."/>
            <person name="Brown L.L."/>
        </authorList>
    </citation>
    <scope>NUCLEOTIDE SEQUENCE [LARGE SCALE GENOMIC DNA]</scope>
    <source>
        <strain>A449</strain>
    </source>
</reference>
<feature type="chain" id="PRO_0000389921" description="NADH-quinone oxidoreductase subunit K">
    <location>
        <begin position="1"/>
        <end position="102"/>
    </location>
</feature>
<feature type="transmembrane region" description="Helical" evidence="1">
    <location>
        <begin position="6"/>
        <end position="26"/>
    </location>
</feature>
<feature type="transmembrane region" description="Helical" evidence="1">
    <location>
        <begin position="30"/>
        <end position="50"/>
    </location>
</feature>
<feature type="transmembrane region" description="Helical" evidence="1">
    <location>
        <begin position="65"/>
        <end position="85"/>
    </location>
</feature>
<keyword id="KW-0997">Cell inner membrane</keyword>
<keyword id="KW-1003">Cell membrane</keyword>
<keyword id="KW-0472">Membrane</keyword>
<keyword id="KW-0520">NAD</keyword>
<keyword id="KW-0874">Quinone</keyword>
<keyword id="KW-1278">Translocase</keyword>
<keyword id="KW-0812">Transmembrane</keyword>
<keyword id="KW-1133">Transmembrane helix</keyword>
<keyword id="KW-0813">Transport</keyword>
<keyword id="KW-0830">Ubiquinone</keyword>
<name>NUOK_AERS4</name>
<accession>A4SLN5</accession>
<protein>
    <recommendedName>
        <fullName evidence="1">NADH-quinone oxidoreductase subunit K</fullName>
        <ecNumber evidence="1">7.1.1.-</ecNumber>
    </recommendedName>
    <alternativeName>
        <fullName evidence="1">NADH dehydrogenase I subunit K</fullName>
    </alternativeName>
    <alternativeName>
        <fullName evidence="1">NDH-1 subunit K</fullName>
    </alternativeName>
</protein>
<gene>
    <name evidence="1" type="primary">nuoK</name>
    <name type="ordered locus">ASA_1727</name>
</gene>
<dbReference type="EC" id="7.1.1.-" evidence="1"/>
<dbReference type="EMBL" id="CP000644">
    <property type="protein sequence ID" value="ABO89807.1"/>
    <property type="molecule type" value="Genomic_DNA"/>
</dbReference>
<dbReference type="RefSeq" id="WP_005314891.1">
    <property type="nucleotide sequence ID" value="NC_009348.1"/>
</dbReference>
<dbReference type="SMR" id="A4SLN5"/>
<dbReference type="STRING" id="29491.GCA_000820065_02197"/>
<dbReference type="GeneID" id="79879452"/>
<dbReference type="KEGG" id="asa:ASA_1727"/>
<dbReference type="eggNOG" id="COG0713">
    <property type="taxonomic scope" value="Bacteria"/>
</dbReference>
<dbReference type="HOGENOM" id="CLU_144724_0_1_6"/>
<dbReference type="Proteomes" id="UP000000225">
    <property type="component" value="Chromosome"/>
</dbReference>
<dbReference type="GO" id="GO:0030964">
    <property type="term" value="C:NADH dehydrogenase complex"/>
    <property type="evidence" value="ECO:0007669"/>
    <property type="project" value="TreeGrafter"/>
</dbReference>
<dbReference type="GO" id="GO:0005886">
    <property type="term" value="C:plasma membrane"/>
    <property type="evidence" value="ECO:0007669"/>
    <property type="project" value="UniProtKB-SubCell"/>
</dbReference>
<dbReference type="GO" id="GO:0050136">
    <property type="term" value="F:NADH:ubiquinone reductase (non-electrogenic) activity"/>
    <property type="evidence" value="ECO:0007669"/>
    <property type="project" value="UniProtKB-UniRule"/>
</dbReference>
<dbReference type="GO" id="GO:0048038">
    <property type="term" value="F:quinone binding"/>
    <property type="evidence" value="ECO:0007669"/>
    <property type="project" value="UniProtKB-KW"/>
</dbReference>
<dbReference type="GO" id="GO:0042773">
    <property type="term" value="P:ATP synthesis coupled electron transport"/>
    <property type="evidence" value="ECO:0007669"/>
    <property type="project" value="InterPro"/>
</dbReference>
<dbReference type="FunFam" id="1.10.287.3510:FF:000001">
    <property type="entry name" value="NADH-quinone oxidoreductase subunit K"/>
    <property type="match status" value="1"/>
</dbReference>
<dbReference type="Gene3D" id="1.10.287.3510">
    <property type="match status" value="1"/>
</dbReference>
<dbReference type="HAMAP" id="MF_01456">
    <property type="entry name" value="NDH1_NuoK"/>
    <property type="match status" value="1"/>
</dbReference>
<dbReference type="InterPro" id="IPR001133">
    <property type="entry name" value="NADH_UbQ_OxRdtase_chain4L/K"/>
</dbReference>
<dbReference type="InterPro" id="IPR039428">
    <property type="entry name" value="NUOK/Mnh_C1-like"/>
</dbReference>
<dbReference type="NCBIfam" id="NF004319">
    <property type="entry name" value="PRK05715.1-1"/>
    <property type="match status" value="1"/>
</dbReference>
<dbReference type="NCBIfam" id="NF004320">
    <property type="entry name" value="PRK05715.1-2"/>
    <property type="match status" value="1"/>
</dbReference>
<dbReference type="PANTHER" id="PTHR11434:SF16">
    <property type="entry name" value="NADH-UBIQUINONE OXIDOREDUCTASE CHAIN 4L"/>
    <property type="match status" value="1"/>
</dbReference>
<dbReference type="PANTHER" id="PTHR11434">
    <property type="entry name" value="NADH-UBIQUINONE OXIDOREDUCTASE SUBUNIT ND4L"/>
    <property type="match status" value="1"/>
</dbReference>
<dbReference type="Pfam" id="PF00420">
    <property type="entry name" value="Oxidored_q2"/>
    <property type="match status" value="1"/>
</dbReference>